<organism>
    <name type="scientific">Danio rerio</name>
    <name type="common">Zebrafish</name>
    <name type="synonym">Brachydanio rerio</name>
    <dbReference type="NCBI Taxonomy" id="7955"/>
    <lineage>
        <taxon>Eukaryota</taxon>
        <taxon>Metazoa</taxon>
        <taxon>Chordata</taxon>
        <taxon>Craniata</taxon>
        <taxon>Vertebrata</taxon>
        <taxon>Euteleostomi</taxon>
        <taxon>Actinopterygii</taxon>
        <taxon>Neopterygii</taxon>
        <taxon>Teleostei</taxon>
        <taxon>Ostariophysi</taxon>
        <taxon>Cypriniformes</taxon>
        <taxon>Danionidae</taxon>
        <taxon>Danioninae</taxon>
        <taxon>Danio</taxon>
    </lineage>
</organism>
<accession>Q5XJ36</accession>
<protein>
    <recommendedName>
        <fullName evidence="8">Parkinson disease protein 7 homolog</fullName>
    </recommendedName>
    <alternativeName>
        <fullName evidence="3">Maillard deglycase</fullName>
    </alternativeName>
    <alternativeName>
        <fullName evidence="3">Parkinsonism-associated deglycase</fullName>
    </alternativeName>
    <alternativeName>
        <fullName evidence="3">Protein DJ-1zDJ-1</fullName>
        <shortName>zDJ-1</shortName>
    </alternativeName>
    <alternativeName>
        <fullName evidence="3">Protein/nucleic acid deglycase DJ-1</fullName>
        <ecNumber evidence="3">3.1.2.-</ecNumber>
        <ecNumber evidence="3">3.5.1.-</ecNumber>
        <ecNumber evidence="3">3.5.1.124</ecNumber>
    </alternativeName>
</protein>
<evidence type="ECO:0000250" key="1"/>
<evidence type="ECO:0000250" key="2">
    <source>
        <dbReference type="UniProtKB" id="O88767"/>
    </source>
</evidence>
<evidence type="ECO:0000250" key="3">
    <source>
        <dbReference type="UniProtKB" id="Q99497"/>
    </source>
</evidence>
<evidence type="ECO:0000250" key="4">
    <source>
        <dbReference type="UniProtKB" id="Q99LX0"/>
    </source>
</evidence>
<evidence type="ECO:0000255" key="5"/>
<evidence type="ECO:0000269" key="6">
    <source>
    </source>
</evidence>
<evidence type="ECO:0000269" key="7">
    <source>
    </source>
</evidence>
<evidence type="ECO:0000305" key="8"/>
<evidence type="ECO:0000312" key="9">
    <source>
        <dbReference type="EMBL" id="AAH83475.1"/>
    </source>
</evidence>
<evidence type="ECO:0000312" key="10">
    <source>
        <dbReference type="EMBL" id="ABI64158.1"/>
    </source>
</evidence>
<comment type="function">
    <text evidence="3 4 7">Multifunctional protein with controversial molecular function which plays an important role in cell protection against oxidative stress and cell death acting as oxidative stress sensor and redox-sensitive chaperone and protease (PubMed:17166173). It is involved in neuroprotective mechanisms like the stabilization of NFE2L2 and PINK1 proteins, male fertility as a positive regulator of androgen signaling pathway as well as cell growth and transformation through, for instance, the modulation of NF-kappa-B signaling pathway. Has been described as a protein and nucleotide deglycase that catalyzes the deglycation of the Maillard adducts formed between amino groups of proteins or nucleotides and reactive carbonyl groups of glyoxals. But this function is rebuted by other works. As a protein deglycase, repairs methylglyoxal- and glyoxal-glycated proteins, and releases repaired proteins and lactate or glycolate, respectively. Deglycates cysteine, arginine and lysine residues in proteins, and thus reactivates these proteins by reversing glycation by glyoxals. Acts on early glycation intermediates (hemithioacetals and aminocarbinols), preventing the formation of advanced glycation endproducts (AGE) that cause irreversible damage. Also functions as a nucleotide deglycase able to repair glycated guanine in the free nucleotide pool (GTP, GDP, GMP, dGTP) and in DNA and RNA. Is thus involved in a major nucleotide repair system named guanine glycation repair (GG repair), dedicated to reversing methylglyoxal and glyoxal damage via nucleotide sanitization and direct nucleic acid repair. Protects histones from adduction by methylglyoxal, controls the levels of methylglyoxal-derived argininine modifications on chromatin. Displays a very low glyoxalase activity that may reflect its deglycase activity. It is involved in neuroprotective mechanisms as well as cell growth and transformation. Its involvement in protein repair could also explain other unrelated functions. Eliminates hydrogen peroxide and protects cells against hydrogen peroxide-induced cell death. Required for correct mitochondrial morphology and function as well as for autophagy of dysfunctional mitochondria. Regulates astrocyte inflammatory responses, may modulate lipid rafts-dependent endocytosis in astrocytes and neuronal cells. Binds to a number of mRNAs containing multiple copies of GG or CC motifs and partially inhibits their translation but dissociates following oxidative stress. Metal-binding protein able to bind copper as well as toxic mercury ions, enhances the cell protection mechanism against induced metal toxicity (By similarity).</text>
</comment>
<comment type="catalytic activity">
    <reaction evidence="3">
        <text>N(omega)-(1-hydroxy-2-oxopropyl)-L-arginyl-[protein] + H2O = lactate + L-arginyl-[protein] + H(+)</text>
        <dbReference type="Rhea" id="RHEA:49548"/>
        <dbReference type="Rhea" id="RHEA-COMP:10532"/>
        <dbReference type="Rhea" id="RHEA-COMP:12428"/>
        <dbReference type="ChEBI" id="CHEBI:15377"/>
        <dbReference type="ChEBI" id="CHEBI:15378"/>
        <dbReference type="ChEBI" id="CHEBI:24996"/>
        <dbReference type="ChEBI" id="CHEBI:29965"/>
        <dbReference type="ChEBI" id="CHEBI:131708"/>
        <dbReference type="EC" id="3.5.1.124"/>
    </reaction>
</comment>
<comment type="catalytic activity">
    <reaction evidence="3">
        <text>N(6)-(1-hydroxy-2-oxopropyl)-L-lysyl-[protein] + H2O = lactate + L-lysyl-[protein] + H(+)</text>
        <dbReference type="Rhea" id="RHEA:49552"/>
        <dbReference type="Rhea" id="RHEA-COMP:9752"/>
        <dbReference type="Rhea" id="RHEA-COMP:12429"/>
        <dbReference type="ChEBI" id="CHEBI:15377"/>
        <dbReference type="ChEBI" id="CHEBI:15378"/>
        <dbReference type="ChEBI" id="CHEBI:24996"/>
        <dbReference type="ChEBI" id="CHEBI:29969"/>
        <dbReference type="ChEBI" id="CHEBI:131709"/>
        <dbReference type="EC" id="3.5.1.124"/>
    </reaction>
</comment>
<comment type="catalytic activity">
    <reaction evidence="3">
        <text>S-(1-hydroxy-2-oxopropyl)-L-cysteinyl-[protein] + H2O = lactate + L-cysteinyl-[protein] + H(+)</text>
        <dbReference type="Rhea" id="RHEA:49556"/>
        <dbReference type="Rhea" id="RHEA-COMP:10131"/>
        <dbReference type="Rhea" id="RHEA-COMP:12430"/>
        <dbReference type="ChEBI" id="CHEBI:15377"/>
        <dbReference type="ChEBI" id="CHEBI:15378"/>
        <dbReference type="ChEBI" id="CHEBI:24996"/>
        <dbReference type="ChEBI" id="CHEBI:29950"/>
        <dbReference type="ChEBI" id="CHEBI:131710"/>
        <dbReference type="EC" id="3.5.1.124"/>
    </reaction>
</comment>
<comment type="catalytic activity">
    <reaction evidence="3">
        <text>N(omega)-(1-hydroxy-2-oxoethyl)-L-arginyl-[protein] + H2O = L-arginyl-[protein] + glycolate + H(+)</text>
        <dbReference type="Rhea" id="RHEA:57188"/>
        <dbReference type="Rhea" id="RHEA-COMP:10532"/>
        <dbReference type="Rhea" id="RHEA-COMP:14844"/>
        <dbReference type="ChEBI" id="CHEBI:15377"/>
        <dbReference type="ChEBI" id="CHEBI:15378"/>
        <dbReference type="ChEBI" id="CHEBI:29805"/>
        <dbReference type="ChEBI" id="CHEBI:29965"/>
        <dbReference type="ChEBI" id="CHEBI:141553"/>
        <dbReference type="EC" id="3.5.1.124"/>
    </reaction>
</comment>
<comment type="catalytic activity">
    <reaction evidence="3">
        <text>N(6)-(1-hydroxy-2-oxoethyl)-L-lysyl-[protein] + H2O = glycolate + L-lysyl-[protein] + H(+)</text>
        <dbReference type="Rhea" id="RHEA:57192"/>
        <dbReference type="Rhea" id="RHEA-COMP:9752"/>
        <dbReference type="Rhea" id="RHEA-COMP:14845"/>
        <dbReference type="ChEBI" id="CHEBI:15377"/>
        <dbReference type="ChEBI" id="CHEBI:15378"/>
        <dbReference type="ChEBI" id="CHEBI:29805"/>
        <dbReference type="ChEBI" id="CHEBI:29969"/>
        <dbReference type="ChEBI" id="CHEBI:141554"/>
        <dbReference type="EC" id="3.5.1.124"/>
    </reaction>
</comment>
<comment type="catalytic activity">
    <reaction evidence="3">
        <text>S-(1-hydroxy-2-oxoethyl)-L-cysteinyl-[protein] + H2O = glycolate + L-cysteinyl-[protein] + H(+)</text>
        <dbReference type="Rhea" id="RHEA:57196"/>
        <dbReference type="Rhea" id="RHEA-COMP:10131"/>
        <dbReference type="Rhea" id="RHEA-COMP:14846"/>
        <dbReference type="ChEBI" id="CHEBI:15377"/>
        <dbReference type="ChEBI" id="CHEBI:15378"/>
        <dbReference type="ChEBI" id="CHEBI:29805"/>
        <dbReference type="ChEBI" id="CHEBI:29950"/>
        <dbReference type="ChEBI" id="CHEBI:141555"/>
        <dbReference type="EC" id="3.5.1.124"/>
    </reaction>
</comment>
<comment type="catalytic activity">
    <reaction evidence="3">
        <text>N(2)-(1-hydroxy-2-oxopropyl)-dGTP + H2O = lactate + dGTP + H(+)</text>
        <dbReference type="Rhea" id="RHEA:57244"/>
        <dbReference type="ChEBI" id="CHEBI:15377"/>
        <dbReference type="ChEBI" id="CHEBI:15378"/>
        <dbReference type="ChEBI" id="CHEBI:24996"/>
        <dbReference type="ChEBI" id="CHEBI:61429"/>
        <dbReference type="ChEBI" id="CHEBI:141569"/>
    </reaction>
</comment>
<comment type="catalytic activity">
    <reaction evidence="3">
        <text>N(2)-(1-hydroxy-2-oxopropyl)-GTP + H2O = lactate + GTP + H(+)</text>
        <dbReference type="Rhea" id="RHEA:57256"/>
        <dbReference type="ChEBI" id="CHEBI:15377"/>
        <dbReference type="ChEBI" id="CHEBI:15378"/>
        <dbReference type="ChEBI" id="CHEBI:24996"/>
        <dbReference type="ChEBI" id="CHEBI:37565"/>
        <dbReference type="ChEBI" id="CHEBI:141570"/>
    </reaction>
</comment>
<comment type="catalytic activity">
    <reaction evidence="3">
        <text>N(2)-(1-hydroxy-2-oxopropyl)-GDP + H2O = lactate + GDP + H(+)</text>
        <dbReference type="Rhea" id="RHEA:57260"/>
        <dbReference type="ChEBI" id="CHEBI:15377"/>
        <dbReference type="ChEBI" id="CHEBI:15378"/>
        <dbReference type="ChEBI" id="CHEBI:24996"/>
        <dbReference type="ChEBI" id="CHEBI:58189"/>
        <dbReference type="ChEBI" id="CHEBI:141573"/>
    </reaction>
</comment>
<comment type="catalytic activity">
    <reaction evidence="3">
        <text>N(2)-(1-hydroxy-2-oxopropyl)-GMP + H2O = lactate + GMP + H(+)</text>
        <dbReference type="Rhea" id="RHEA:57268"/>
        <dbReference type="ChEBI" id="CHEBI:15377"/>
        <dbReference type="ChEBI" id="CHEBI:15378"/>
        <dbReference type="ChEBI" id="CHEBI:24996"/>
        <dbReference type="ChEBI" id="CHEBI:58115"/>
        <dbReference type="ChEBI" id="CHEBI:141575"/>
    </reaction>
</comment>
<comment type="catalytic activity">
    <reaction evidence="3">
        <text>N(2)-(1-hydroxy-2-oxoethyl)-dGTP + H2O = dGTP + glycolate + H(+)</text>
        <dbReference type="Rhea" id="RHEA:57248"/>
        <dbReference type="ChEBI" id="CHEBI:15377"/>
        <dbReference type="ChEBI" id="CHEBI:15378"/>
        <dbReference type="ChEBI" id="CHEBI:29805"/>
        <dbReference type="ChEBI" id="CHEBI:61429"/>
        <dbReference type="ChEBI" id="CHEBI:141572"/>
    </reaction>
</comment>
<comment type="catalytic activity">
    <reaction evidence="3">
        <text>N(2)-(1-hydroxy-2-oxoethyl)-GTP + H2O = glycolate + GTP + H(+)</text>
        <dbReference type="Rhea" id="RHEA:57252"/>
        <dbReference type="ChEBI" id="CHEBI:15377"/>
        <dbReference type="ChEBI" id="CHEBI:15378"/>
        <dbReference type="ChEBI" id="CHEBI:29805"/>
        <dbReference type="ChEBI" id="CHEBI:37565"/>
        <dbReference type="ChEBI" id="CHEBI:141571"/>
    </reaction>
</comment>
<comment type="catalytic activity">
    <reaction evidence="3">
        <text>N(2)-(1-hydroxy-2-oxoethyl)-GDP + H2O = glycolate + GDP + H(+)</text>
        <dbReference type="Rhea" id="RHEA:57264"/>
        <dbReference type="ChEBI" id="CHEBI:15377"/>
        <dbReference type="ChEBI" id="CHEBI:15378"/>
        <dbReference type="ChEBI" id="CHEBI:29805"/>
        <dbReference type="ChEBI" id="CHEBI:58189"/>
        <dbReference type="ChEBI" id="CHEBI:141574"/>
    </reaction>
</comment>
<comment type="catalytic activity">
    <reaction evidence="3">
        <text>N(2)-(1-hydroxy-2-oxoethyl)-GMP + H2O = glycolate + GMP + H(+)</text>
        <dbReference type="Rhea" id="RHEA:57304"/>
        <dbReference type="ChEBI" id="CHEBI:15377"/>
        <dbReference type="ChEBI" id="CHEBI:15378"/>
        <dbReference type="ChEBI" id="CHEBI:29805"/>
        <dbReference type="ChEBI" id="CHEBI:58115"/>
        <dbReference type="ChEBI" id="CHEBI:141576"/>
    </reaction>
</comment>
<comment type="catalytic activity">
    <reaction evidence="3">
        <text>an N(2)-(1-hydroxy-2-oxopropyl)-guanosine in RNA + H2O = a guanosine in RNA + lactate + H(+)</text>
        <dbReference type="Rhea" id="RHEA:57288"/>
        <dbReference type="Rhea" id="RHEA-COMP:14855"/>
        <dbReference type="Rhea" id="RHEA-COMP:14858"/>
        <dbReference type="ChEBI" id="CHEBI:15377"/>
        <dbReference type="ChEBI" id="CHEBI:15378"/>
        <dbReference type="ChEBI" id="CHEBI:24996"/>
        <dbReference type="ChEBI" id="CHEBI:74269"/>
        <dbReference type="ChEBI" id="CHEBI:141580"/>
    </reaction>
</comment>
<comment type="catalytic activity">
    <reaction evidence="3">
        <text>an N(2)-(1-hydroxy-2-oxopropyl)-2'-deoxyguanosine in DNA + H2O = a 2'-deoxyguanosine in DNA + lactate + H(+)</text>
        <dbReference type="Rhea" id="RHEA:57300"/>
        <dbReference type="Rhea" id="RHEA-COMP:11367"/>
        <dbReference type="Rhea" id="RHEA-COMP:14856"/>
        <dbReference type="ChEBI" id="CHEBI:15377"/>
        <dbReference type="ChEBI" id="CHEBI:15378"/>
        <dbReference type="ChEBI" id="CHEBI:24996"/>
        <dbReference type="ChEBI" id="CHEBI:85445"/>
        <dbReference type="ChEBI" id="CHEBI:141578"/>
    </reaction>
</comment>
<comment type="catalytic activity">
    <reaction evidence="3">
        <text>an N(2)-(1-hydroxy-2-oxoethyl)-guanosine in RNA + H2O = a guanosine in RNA + glycolate + H(+)</text>
        <dbReference type="Rhea" id="RHEA:57292"/>
        <dbReference type="Rhea" id="RHEA-COMP:14855"/>
        <dbReference type="Rhea" id="RHEA-COMP:14859"/>
        <dbReference type="ChEBI" id="CHEBI:15377"/>
        <dbReference type="ChEBI" id="CHEBI:15378"/>
        <dbReference type="ChEBI" id="CHEBI:29805"/>
        <dbReference type="ChEBI" id="CHEBI:74269"/>
        <dbReference type="ChEBI" id="CHEBI:141581"/>
    </reaction>
</comment>
<comment type="catalytic activity">
    <reaction evidence="3">
        <text>an N(2)-(1-hydroxy-2-oxoethyl)-2'-deoxyguanosine in DNA + H2O = a 2'-deoxyguanosine in DNA + glycolate + H(+)</text>
        <dbReference type="Rhea" id="RHEA:57296"/>
        <dbReference type="Rhea" id="RHEA-COMP:11367"/>
        <dbReference type="Rhea" id="RHEA-COMP:14857"/>
        <dbReference type="ChEBI" id="CHEBI:15377"/>
        <dbReference type="ChEBI" id="CHEBI:15378"/>
        <dbReference type="ChEBI" id="CHEBI:29805"/>
        <dbReference type="ChEBI" id="CHEBI:85445"/>
        <dbReference type="ChEBI" id="CHEBI:141579"/>
    </reaction>
</comment>
<comment type="cofactor">
    <text evidence="3">Deglycase activity does not require glutathione as a cofactor, however, glycated glutathione constitutes a PARK7 substrate.</text>
</comment>
<comment type="subunit">
    <text evidence="3">Homodimer.</text>
</comment>
<comment type="subcellular location">
    <subcellularLocation>
        <location evidence="2">Cell membrane</location>
        <topology evidence="2">Lipid-anchor</topology>
    </subcellularLocation>
    <subcellularLocation>
        <location evidence="3">Cytoplasm</location>
    </subcellularLocation>
    <subcellularLocation>
        <location evidence="3">Nucleus</location>
    </subcellularLocation>
    <subcellularLocation>
        <location evidence="2">Membrane raft</location>
    </subcellularLocation>
    <subcellularLocation>
        <location evidence="3">Mitochondrion</location>
    </subcellularLocation>
    <subcellularLocation>
        <location evidence="3">Endoplasmic reticulum</location>
    </subcellularLocation>
    <text evidence="3">Under normal conditions, located predominantly in the cytoplasm and, to a lesser extent, in the nucleus and mitochondrion. Translocates to the mitochondrion and subsequently to the nucleus in response to oxidative stress and exerts an increased cytoprotective effect against oxidative damage. Detected in tau inclusions in brains from neurodegenerative disease patients. Membrane raft localization in astrocytes and neuronal cells requires palmitoylation.</text>
</comment>
<comment type="tissue specificity">
    <text evidence="6 7">Larval brain and gut from 96 hours post-fertilization (hpf). Ubiquitous in adult; most abundant in brain, eye, heart and muscle. Within brain, neuronal expression is widespread, particularly in the cerebellum, medullary reticular formation and diencephalon. Expressed in major forebrain and diencephalic dopaminergic cell groups.</text>
</comment>
<comment type="developmental stage">
    <text evidence="6 7">Present from tailbud stage (10 hpf) through to adult. Levels increase from 24-120 hpf.</text>
</comment>
<comment type="PTM">
    <text evidence="3">Sumoylated on Lys-130 by pias2 or pias4; which is essential for cell-growth promoting activity and transforming activity.</text>
</comment>
<comment type="PTM">
    <text evidence="3">Undergoes cleavage of a C-terminal peptide and subsequent activation of protease activity in response to oxidative stress.</text>
</comment>
<comment type="similarity">
    <text evidence="5">Belongs to the peptidase C56 family.</text>
</comment>
<comment type="caution">
    <text evidence="3">Glyoxalase activity has been reported. It may however reflect its deglycase activity.</text>
</comment>
<comment type="caution">
    <text evidence="3">The protein deglycation activity is controversial. It has been ascribed to a TRIS buffer artifact by a publication and as a result of the removal of methylglyoxal by glyoxalase activity that leads to a subsequent decomposition of hemithioacetals and hemianimals due to the shift in equilibrium position by another one. However, biochemical experiments showing that PARK7 is a bona fide deglycase have been performed.</text>
</comment>
<proteinExistence type="evidence at transcript level"/>
<name>PARK7_DANRE</name>
<feature type="chain" id="PRO_0000285970" description="Parkinson disease protein 7 homolog">
    <location>
        <begin position="1"/>
        <end status="unknown"/>
    </location>
</feature>
<feature type="propeptide" id="PRO_0000405563" description="Removed in mature form">
    <location>
        <begin status="unknown"/>
        <end position="189"/>
    </location>
</feature>
<feature type="active site" description="Nucleophile" evidence="3">
    <location>
        <position position="106"/>
    </location>
</feature>
<feature type="active site" evidence="3">
    <location>
        <position position="126"/>
    </location>
</feature>
<feature type="modified residue" description="Phosphotyrosine" evidence="3">
    <location>
        <position position="67"/>
    </location>
</feature>
<feature type="modified residue" description="Cysteine sulfinic acid (-SO2H)" evidence="3">
    <location>
        <position position="106"/>
    </location>
</feature>
<feature type="modified residue" description="Cysteine sulfinic acid (-SO2H); alternate" evidence="3">
    <location>
        <position position="106"/>
    </location>
</feature>
<feature type="modified residue" description="N6-acetyllysine" evidence="4">
    <location>
        <position position="148"/>
    </location>
</feature>
<feature type="modified residue" description="N6-succinyllysine" evidence="4">
    <location>
        <position position="182"/>
    </location>
</feature>
<feature type="lipid moiety-binding region" description="S-palmitoyl cysteine" evidence="3">
    <location>
        <position position="46"/>
    </location>
</feature>
<feature type="lipid moiety-binding region" description="S-palmitoyl cysteine" evidence="3">
    <location>
        <position position="53"/>
    </location>
</feature>
<feature type="lipid moiety-binding region" description="S-palmitoyl cysteine" evidence="1">
    <location>
        <position position="106"/>
    </location>
</feature>
<feature type="lipid moiety-binding region" description="S-palmitoyl cysteine; alternate" evidence="3">
    <location>
        <position position="106"/>
    </location>
</feature>
<feature type="cross-link" description="Glycyl lysine isopeptide (Lys-Gly) (interchain with G-Cter in SUMO)" evidence="3">
    <location>
        <position position="130"/>
    </location>
</feature>
<keyword id="KW-0007">Acetylation</keyword>
<keyword id="KW-0072">Autophagy</keyword>
<keyword id="KW-1003">Cell membrane</keyword>
<keyword id="KW-0143">Chaperone</keyword>
<keyword id="KW-0186">Copper</keyword>
<keyword id="KW-0963">Cytoplasm</keyword>
<keyword id="KW-0256">Endoplasmic reticulum</keyword>
<keyword id="KW-0278">Fertilization</keyword>
<keyword id="KW-0378">Hydrolase</keyword>
<keyword id="KW-0395">Inflammatory response</keyword>
<keyword id="KW-1017">Isopeptide bond</keyword>
<keyword id="KW-0449">Lipoprotein</keyword>
<keyword id="KW-0472">Membrane</keyword>
<keyword id="KW-0496">Mitochondrion</keyword>
<keyword id="KW-0539">Nucleus</keyword>
<keyword id="KW-0558">Oxidation</keyword>
<keyword id="KW-0564">Palmitate</keyword>
<keyword id="KW-0597">Phosphoprotein</keyword>
<keyword id="KW-0645">Protease</keyword>
<keyword id="KW-1185">Reference proteome</keyword>
<keyword id="KW-0694">RNA-binding</keyword>
<keyword id="KW-0346">Stress response</keyword>
<keyword id="KW-0043">Tumor suppressor</keyword>
<keyword id="KW-0832">Ubl conjugation</keyword>
<keyword id="KW-0865">Zymogen</keyword>
<dbReference type="EC" id="3.1.2.-" evidence="3"/>
<dbReference type="EC" id="3.5.1.-" evidence="3"/>
<dbReference type="EC" id="3.5.1.124" evidence="3"/>
<dbReference type="EMBL" id="DQ882651">
    <property type="protein sequence ID" value="ABI64158.1"/>
    <property type="molecule type" value="mRNA"/>
</dbReference>
<dbReference type="EMBL" id="BC083475">
    <property type="protein sequence ID" value="AAH83475.1"/>
    <property type="molecule type" value="mRNA"/>
</dbReference>
<dbReference type="RefSeq" id="NP_001005938.1">
    <property type="nucleotide sequence ID" value="NM_001005938.1"/>
</dbReference>
<dbReference type="SMR" id="Q5XJ36"/>
<dbReference type="FunCoup" id="Q5XJ36">
    <property type="interactions" value="1802"/>
</dbReference>
<dbReference type="STRING" id="7955.ENSDARP00000150435"/>
<dbReference type="MEROPS" id="C56.971"/>
<dbReference type="PaxDb" id="7955-ENSDARP00000041530"/>
<dbReference type="Ensembl" id="ENSDART00000182285">
    <property type="protein sequence ID" value="ENSDARP00000150435"/>
    <property type="gene ID" value="ENSDARG00000116835"/>
</dbReference>
<dbReference type="GeneID" id="449674"/>
<dbReference type="KEGG" id="dre:449674"/>
<dbReference type="AGR" id="ZFIN:ZDB-GENE-041010-5"/>
<dbReference type="CTD" id="11315"/>
<dbReference type="ZFIN" id="ZDB-GENE-041010-5">
    <property type="gene designation" value="park7"/>
</dbReference>
<dbReference type="eggNOG" id="KOG2764">
    <property type="taxonomic scope" value="Eukaryota"/>
</dbReference>
<dbReference type="HOGENOM" id="CLU_000445_44_2_1"/>
<dbReference type="InParanoid" id="Q5XJ36"/>
<dbReference type="OMA" id="KATCYPG"/>
<dbReference type="OrthoDB" id="543156at2759"/>
<dbReference type="PhylomeDB" id="Q5XJ36"/>
<dbReference type="TreeFam" id="TF300119"/>
<dbReference type="Reactome" id="R-DRE-9646399">
    <property type="pathway name" value="Aggrephagy"/>
</dbReference>
<dbReference type="PRO" id="PR:Q5XJ36"/>
<dbReference type="Proteomes" id="UP000000437">
    <property type="component" value="Chromosome 11"/>
</dbReference>
<dbReference type="Bgee" id="ENSDARG00000116835">
    <property type="expression patterns" value="Expressed in muscle tissue and 40 other cell types or tissues"/>
</dbReference>
<dbReference type="GO" id="GO:0005737">
    <property type="term" value="C:cytoplasm"/>
    <property type="evidence" value="ECO:0000250"/>
    <property type="project" value="UniProtKB"/>
</dbReference>
<dbReference type="GO" id="GO:0005783">
    <property type="term" value="C:endoplasmic reticulum"/>
    <property type="evidence" value="ECO:0007669"/>
    <property type="project" value="UniProtKB-SubCell"/>
</dbReference>
<dbReference type="GO" id="GO:0045121">
    <property type="term" value="C:membrane raft"/>
    <property type="evidence" value="ECO:0007669"/>
    <property type="project" value="UniProtKB-SubCell"/>
</dbReference>
<dbReference type="GO" id="GO:0005739">
    <property type="term" value="C:mitochondrion"/>
    <property type="evidence" value="ECO:0000250"/>
    <property type="project" value="UniProtKB"/>
</dbReference>
<dbReference type="GO" id="GO:0005634">
    <property type="term" value="C:nucleus"/>
    <property type="evidence" value="ECO:0000250"/>
    <property type="project" value="UniProtKB"/>
</dbReference>
<dbReference type="GO" id="GO:0005886">
    <property type="term" value="C:plasma membrane"/>
    <property type="evidence" value="ECO:0007669"/>
    <property type="project" value="UniProtKB-SubCell"/>
</dbReference>
<dbReference type="GO" id="GO:1990422">
    <property type="term" value="F:glyoxalase (glycolic acid-forming) activity"/>
    <property type="evidence" value="ECO:0000250"/>
    <property type="project" value="UniProtKB"/>
</dbReference>
<dbReference type="GO" id="GO:0003729">
    <property type="term" value="F:mRNA binding"/>
    <property type="evidence" value="ECO:0000250"/>
    <property type="project" value="UniProtKB"/>
</dbReference>
<dbReference type="GO" id="GO:0016684">
    <property type="term" value="F:oxidoreductase activity, acting on peroxide as acceptor"/>
    <property type="evidence" value="ECO:0000318"/>
    <property type="project" value="GO_Central"/>
</dbReference>
<dbReference type="GO" id="GO:0008233">
    <property type="term" value="F:peptidase activity"/>
    <property type="evidence" value="ECO:0000250"/>
    <property type="project" value="UniProtKB"/>
</dbReference>
<dbReference type="GO" id="GO:0042803">
    <property type="term" value="F:protein homodimerization activity"/>
    <property type="evidence" value="ECO:0000250"/>
    <property type="project" value="UniProtKB"/>
</dbReference>
<dbReference type="GO" id="GO:0006914">
    <property type="term" value="P:autophagy"/>
    <property type="evidence" value="ECO:0007669"/>
    <property type="project" value="UniProtKB-KW"/>
</dbReference>
<dbReference type="GO" id="GO:0034599">
    <property type="term" value="P:cellular response to oxidative stress"/>
    <property type="evidence" value="ECO:0000250"/>
    <property type="project" value="UniProtKB"/>
</dbReference>
<dbReference type="GO" id="GO:0061691">
    <property type="term" value="P:detoxification of hydrogen peroxide"/>
    <property type="evidence" value="ECO:0000250"/>
    <property type="project" value="UniProtKB"/>
</dbReference>
<dbReference type="GO" id="GO:0006281">
    <property type="term" value="P:DNA repair"/>
    <property type="evidence" value="ECO:0000250"/>
    <property type="project" value="UniProtKB"/>
</dbReference>
<dbReference type="GO" id="GO:0071542">
    <property type="term" value="P:dopaminergic neuron differentiation"/>
    <property type="evidence" value="ECO:0000315"/>
    <property type="project" value="ZFIN"/>
</dbReference>
<dbReference type="GO" id="GO:0042593">
    <property type="term" value="P:glucose homeostasis"/>
    <property type="evidence" value="ECO:0000250"/>
    <property type="project" value="UniProtKB"/>
</dbReference>
<dbReference type="GO" id="GO:0046295">
    <property type="term" value="P:glycolate biosynthetic process"/>
    <property type="evidence" value="ECO:0000318"/>
    <property type="project" value="GO_Central"/>
</dbReference>
<dbReference type="GO" id="GO:1903189">
    <property type="term" value="P:glyoxal metabolic process"/>
    <property type="evidence" value="ECO:0000318"/>
    <property type="project" value="GO_Central"/>
</dbReference>
<dbReference type="GO" id="GO:0106044">
    <property type="term" value="P:guanine deglycation"/>
    <property type="evidence" value="ECO:0000250"/>
    <property type="project" value="UniProtKB"/>
</dbReference>
<dbReference type="GO" id="GO:0106046">
    <property type="term" value="P:guanine deglycation, glyoxal removal"/>
    <property type="evidence" value="ECO:0000250"/>
    <property type="project" value="UniProtKB"/>
</dbReference>
<dbReference type="GO" id="GO:0106045">
    <property type="term" value="P:guanine deglycation, methylglyoxal removal"/>
    <property type="evidence" value="ECO:0000250"/>
    <property type="project" value="UniProtKB"/>
</dbReference>
<dbReference type="GO" id="GO:0006954">
    <property type="term" value="P:inflammatory response"/>
    <property type="evidence" value="ECO:0007669"/>
    <property type="project" value="UniProtKB-KW"/>
</dbReference>
<dbReference type="GO" id="GO:0030073">
    <property type="term" value="P:insulin secretion"/>
    <property type="evidence" value="ECO:0000250"/>
    <property type="project" value="UniProtKB"/>
</dbReference>
<dbReference type="GO" id="GO:1903427">
    <property type="term" value="P:negative regulation of reactive oxygen species biosynthetic process"/>
    <property type="evidence" value="ECO:0000250"/>
    <property type="project" value="UniProtKB"/>
</dbReference>
<dbReference type="GO" id="GO:2000277">
    <property type="term" value="P:positive regulation of oxidative phosphorylation uncoupler activity"/>
    <property type="evidence" value="ECO:0000250"/>
    <property type="project" value="UniProtKB"/>
</dbReference>
<dbReference type="GO" id="GO:0050821">
    <property type="term" value="P:protein stabilization"/>
    <property type="evidence" value="ECO:0000250"/>
    <property type="project" value="UniProtKB"/>
</dbReference>
<dbReference type="GO" id="GO:0006508">
    <property type="term" value="P:proteolysis"/>
    <property type="evidence" value="ECO:0007669"/>
    <property type="project" value="UniProtKB-KW"/>
</dbReference>
<dbReference type="GO" id="GO:0043523">
    <property type="term" value="P:regulation of neuron apoptotic process"/>
    <property type="evidence" value="ECO:0000250"/>
    <property type="project" value="UniProtKB"/>
</dbReference>
<dbReference type="GO" id="GO:0006979">
    <property type="term" value="P:response to oxidative stress"/>
    <property type="evidence" value="ECO:0000315"/>
    <property type="project" value="ZFIN"/>
</dbReference>
<dbReference type="GO" id="GO:0001895">
    <property type="term" value="P:retina homeostasis"/>
    <property type="evidence" value="ECO:0000315"/>
    <property type="project" value="ZFIN"/>
</dbReference>
<dbReference type="GO" id="GO:0007338">
    <property type="term" value="P:single fertilization"/>
    <property type="evidence" value="ECO:0007669"/>
    <property type="project" value="UniProtKB-KW"/>
</dbReference>
<dbReference type="GO" id="GO:0036269">
    <property type="term" value="P:swimming behavior"/>
    <property type="evidence" value="ECO:0000315"/>
    <property type="project" value="ZFIN"/>
</dbReference>
<dbReference type="CDD" id="cd03135">
    <property type="entry name" value="GATase1_DJ-1"/>
    <property type="match status" value="1"/>
</dbReference>
<dbReference type="FunFam" id="3.40.50.880:FF:000057">
    <property type="entry name" value="Protein/nucleic acid deglycase DJ-1"/>
    <property type="match status" value="1"/>
</dbReference>
<dbReference type="Gene3D" id="3.40.50.880">
    <property type="match status" value="1"/>
</dbReference>
<dbReference type="InterPro" id="IPR029062">
    <property type="entry name" value="Class_I_gatase-like"/>
</dbReference>
<dbReference type="InterPro" id="IPR006287">
    <property type="entry name" value="DJ-1"/>
</dbReference>
<dbReference type="InterPro" id="IPR002818">
    <property type="entry name" value="DJ-1/PfpI"/>
</dbReference>
<dbReference type="InterPro" id="IPR050325">
    <property type="entry name" value="Prot/Nucl_acid_deglycase"/>
</dbReference>
<dbReference type="NCBIfam" id="TIGR01383">
    <property type="entry name" value="not_thiJ"/>
    <property type="match status" value="1"/>
</dbReference>
<dbReference type="PANTHER" id="PTHR48094:SF12">
    <property type="entry name" value="PARKINSON DISEASE PROTEIN 7 HOMOLOG"/>
    <property type="match status" value="1"/>
</dbReference>
<dbReference type="PANTHER" id="PTHR48094">
    <property type="entry name" value="PROTEIN/NUCLEIC ACID DEGLYCASE DJ-1-RELATED"/>
    <property type="match status" value="1"/>
</dbReference>
<dbReference type="Pfam" id="PF01965">
    <property type="entry name" value="DJ-1_PfpI"/>
    <property type="match status" value="1"/>
</dbReference>
<dbReference type="SUPFAM" id="SSF52317">
    <property type="entry name" value="Class I glutamine amidotransferase-like"/>
    <property type="match status" value="1"/>
</dbReference>
<sequence>MAGKRALVILAKGAEEMETVIPVDVMRRAGIAVTVAGLAGKEPVQCSREVMICPDSSLEDAHKQGPYDVVLLPGGLLGAQNLSESPAVKEVLKDQEGRKGLIAAICAGPTALLAHGIAYGSTVTTHPGAKDKMMAGDHYKYSEARVQKDGNVITSRGPGTSFEFALTIVEELMGAEVAAQVKAPLILKD</sequence>
<gene>
    <name evidence="9" type="primary">park7</name>
    <name evidence="10" type="synonym">dj1</name>
    <name type="ORF">zgc:103725</name>
</gene>
<reference evidence="10" key="1">
    <citation type="journal article" date="2006" name="Brain Res.">
        <title>Zebrafish DJ-1 is evolutionarily conserved and expressed in dopaminergic neurons.</title>
        <authorList>
            <person name="Bai Q."/>
            <person name="Mullett S.J."/>
            <person name="Garver J.A."/>
            <person name="Hinkle D.A."/>
            <person name="Burton E.A."/>
        </authorList>
    </citation>
    <scope>NUCLEOTIDE SEQUENCE [MRNA]</scope>
    <scope>SUBCELLULAR LOCATION</scope>
    <scope>TISSUE SPECIFICITY</scope>
    <scope>DEVELOPMENTAL STAGE</scope>
    <source>
        <strain evidence="10">AB</strain>
        <tissue evidence="6">Brain</tissue>
    </source>
</reference>
<reference key="2">
    <citation type="journal article" date="2007" name="J. Neurochem.">
        <title>p53-dependent neuronal cell death in a DJ-1-deficient zebrafish model of Parkinson's disease.</title>
        <authorList>
            <person name="Bretaud S."/>
            <person name="Allen C."/>
            <person name="Ingham P.W."/>
            <person name="Bandmann O."/>
        </authorList>
    </citation>
    <scope>NUCLEOTIDE SEQUENCE [MRNA]</scope>
    <scope>FUNCTION</scope>
    <scope>TISSUE SPECIFICITY</scope>
    <scope>DEVELOPMENTAL STAGE</scope>
</reference>
<reference evidence="9" key="3">
    <citation type="submission" date="2004-10" db="EMBL/GenBank/DDBJ databases">
        <authorList>
            <consortium name="NIH - Zebrafish Gene Collection (ZGC) project"/>
        </authorList>
    </citation>
    <scope>NUCLEOTIDE SEQUENCE [LARGE SCALE MRNA]</scope>
    <source>
        <strain>AB</strain>
        <tissue evidence="9">Liver</tissue>
    </source>
</reference>